<gene>
    <name evidence="1" type="primary">nucS</name>
    <name type="ordered locus">Arth_2599</name>
</gene>
<dbReference type="EC" id="3.1.-.-" evidence="1"/>
<dbReference type="EMBL" id="CP000454">
    <property type="protein sequence ID" value="ABK03978.1"/>
    <property type="molecule type" value="Genomic_DNA"/>
</dbReference>
<dbReference type="RefSeq" id="WP_011692440.1">
    <property type="nucleotide sequence ID" value="NC_008541.1"/>
</dbReference>
<dbReference type="SMR" id="A0JY58"/>
<dbReference type="STRING" id="290399.Arth_2599"/>
<dbReference type="KEGG" id="art:Arth_2599"/>
<dbReference type="eggNOG" id="COG1637">
    <property type="taxonomic scope" value="Bacteria"/>
</dbReference>
<dbReference type="HOGENOM" id="CLU_069350_0_0_11"/>
<dbReference type="OrthoDB" id="3344925at2"/>
<dbReference type="Proteomes" id="UP000000754">
    <property type="component" value="Chromosome"/>
</dbReference>
<dbReference type="GO" id="GO:0005737">
    <property type="term" value="C:cytoplasm"/>
    <property type="evidence" value="ECO:0007669"/>
    <property type="project" value="UniProtKB-SubCell"/>
</dbReference>
<dbReference type="GO" id="GO:0003677">
    <property type="term" value="F:DNA binding"/>
    <property type="evidence" value="ECO:0007669"/>
    <property type="project" value="UniProtKB-KW"/>
</dbReference>
<dbReference type="GO" id="GO:0000014">
    <property type="term" value="F:single-stranded DNA endodeoxyribonuclease activity"/>
    <property type="evidence" value="ECO:0007669"/>
    <property type="project" value="UniProtKB-UniRule"/>
</dbReference>
<dbReference type="CDD" id="cd22341">
    <property type="entry name" value="NucS-like"/>
    <property type="match status" value="1"/>
</dbReference>
<dbReference type="Gene3D" id="2.70.180.20">
    <property type="match status" value="1"/>
</dbReference>
<dbReference type="Gene3D" id="3.40.1350.10">
    <property type="match status" value="1"/>
</dbReference>
<dbReference type="HAMAP" id="MF_00722">
    <property type="entry name" value="NucS"/>
    <property type="match status" value="1"/>
</dbReference>
<dbReference type="InterPro" id="IPR002793">
    <property type="entry name" value="Endonuclease_NucS"/>
</dbReference>
<dbReference type="InterPro" id="IPR048301">
    <property type="entry name" value="NucS_C"/>
</dbReference>
<dbReference type="InterPro" id="IPR048302">
    <property type="entry name" value="NucS_N"/>
</dbReference>
<dbReference type="InterPro" id="IPR049173">
    <property type="entry name" value="NucS_N_sf"/>
</dbReference>
<dbReference type="InterPro" id="IPR011856">
    <property type="entry name" value="tRNA_endonuc-like_dom_sf"/>
</dbReference>
<dbReference type="NCBIfam" id="NF002876">
    <property type="entry name" value="PRK03298.1"/>
    <property type="match status" value="1"/>
</dbReference>
<dbReference type="PANTHER" id="PTHR38814">
    <property type="entry name" value="ENDONUCLEASE NUCS"/>
    <property type="match status" value="1"/>
</dbReference>
<dbReference type="PANTHER" id="PTHR38814:SF1">
    <property type="entry name" value="ENDONUCLEASE NUCS"/>
    <property type="match status" value="1"/>
</dbReference>
<dbReference type="Pfam" id="PF01939">
    <property type="entry name" value="NucS_C"/>
    <property type="match status" value="1"/>
</dbReference>
<dbReference type="Pfam" id="PF21003">
    <property type="entry name" value="NucS_N"/>
    <property type="match status" value="1"/>
</dbReference>
<comment type="function">
    <text evidence="1">Cleaves both 3' and 5' ssDNA extremities of branched DNA structures.</text>
</comment>
<comment type="subcellular location">
    <subcellularLocation>
        <location evidence="1">Cytoplasm</location>
    </subcellularLocation>
</comment>
<comment type="similarity">
    <text evidence="1">Belongs to the NucS endonuclease family.</text>
</comment>
<protein>
    <recommendedName>
        <fullName evidence="1">Endonuclease NucS</fullName>
        <ecNumber evidence="1">3.1.-.-</ecNumber>
    </recommendedName>
</protein>
<feature type="chain" id="PRO_1000045825" description="Endonuclease NucS">
    <location>
        <begin position="1"/>
        <end position="231"/>
    </location>
</feature>
<reference key="1">
    <citation type="journal article" date="2013" name="Stand. Genomic Sci.">
        <title>Complete genome sequence of Arthrobacter sp. strain FB24.</title>
        <authorList>
            <person name="Nakatsu C.H."/>
            <person name="Barabote R."/>
            <person name="Thompson S."/>
            <person name="Bruce D."/>
            <person name="Detter C."/>
            <person name="Brettin T."/>
            <person name="Han C."/>
            <person name="Beasley F."/>
            <person name="Chen W."/>
            <person name="Konopka A."/>
            <person name="Xie G."/>
        </authorList>
    </citation>
    <scope>NUCLEOTIDE SEQUENCE [LARGE SCALE GENOMIC DNA]</scope>
    <source>
        <strain>FB24</strain>
    </source>
</reference>
<keyword id="KW-0963">Cytoplasm</keyword>
<keyword id="KW-0238">DNA-binding</keyword>
<keyword id="KW-0255">Endonuclease</keyword>
<keyword id="KW-0378">Hydrolase</keyword>
<keyword id="KW-0540">Nuclease</keyword>
<keyword id="KW-1185">Reference proteome</keyword>
<evidence type="ECO:0000255" key="1">
    <source>
        <dbReference type="HAMAP-Rule" id="MF_00722"/>
    </source>
</evidence>
<accession>A0JY58</accession>
<organism>
    <name type="scientific">Arthrobacter sp. (strain FB24)</name>
    <dbReference type="NCBI Taxonomy" id="290399"/>
    <lineage>
        <taxon>Bacteria</taxon>
        <taxon>Bacillati</taxon>
        <taxon>Actinomycetota</taxon>
        <taxon>Actinomycetes</taxon>
        <taxon>Micrococcales</taxon>
        <taxon>Micrococcaceae</taxon>
        <taxon>Arthrobacter</taxon>
    </lineage>
</organism>
<name>NUCS_ARTS2</name>
<sequence length="231" mass="25561">MRLVIARCSVDYVGRLKAHLPLATRLLLVKADGSVLVHSDGGSYKPLNWMSPPASLRVSTPDEVDLELGVTEQWTVQSAKTDDRLIINIHEQLHDTSHELGQDPGLIKDGVEADLQRLLADQIERLGTGFSLIRREYFTAIGPVDILARDADGATVAIELKRRGDIDGVEQLTRYLELLNRDPLLAPVRGIFAAQQIKPQAKVLANDRGIDCVTLDYDAMRGVDDSESRLF</sequence>
<proteinExistence type="inferred from homology"/>